<organism>
    <name type="scientific">Klebsiella pneumoniae subsp. pneumoniae (strain ATCC 700721 / MGH 78578)</name>
    <dbReference type="NCBI Taxonomy" id="272620"/>
    <lineage>
        <taxon>Bacteria</taxon>
        <taxon>Pseudomonadati</taxon>
        <taxon>Pseudomonadota</taxon>
        <taxon>Gammaproteobacteria</taxon>
        <taxon>Enterobacterales</taxon>
        <taxon>Enterobacteriaceae</taxon>
        <taxon>Klebsiella/Raoultella group</taxon>
        <taxon>Klebsiella</taxon>
        <taxon>Klebsiella pneumoniae complex</taxon>
    </lineage>
</organism>
<evidence type="ECO:0000250" key="1"/>
<evidence type="ECO:0000255" key="2"/>
<evidence type="ECO:0000305" key="3"/>
<comment type="function">
    <text evidence="1">Part of the ecpRABCDE operon, which encodes the E.coli common pilus (ECP). ECP plays a dual role in early-stage biofilm development and host cell recognition (By similarity).</text>
</comment>
<comment type="induction">
    <text evidence="1">Positively regulated by EcpR.</text>
</comment>
<comment type="similarity">
    <text evidence="3">Belongs to the EcpB/EcpE family.</text>
</comment>
<accession>A6T573</accession>
<keyword id="KW-0143">Chaperone</keyword>
<keyword id="KW-1029">Fimbrium biogenesis</keyword>
<keyword id="KW-0732">Signal</keyword>
<protein>
    <recommendedName>
        <fullName>Probable fimbrial chaperone EcpB</fullName>
    </recommendedName>
</protein>
<name>ECPB_KLEP7</name>
<dbReference type="EMBL" id="CP000647">
    <property type="protein sequence ID" value="ABR75744.1"/>
    <property type="molecule type" value="Genomic_DNA"/>
</dbReference>
<dbReference type="RefSeq" id="WP_004144586.1">
    <property type="nucleotide sequence ID" value="NC_009648.1"/>
</dbReference>
<dbReference type="SMR" id="A6T573"/>
<dbReference type="STRING" id="272620.KPN_00292"/>
<dbReference type="PaxDb" id="272620-KPN_00292"/>
<dbReference type="EnsemblBacteria" id="ABR75744">
    <property type="protein sequence ID" value="ABR75744"/>
    <property type="gene ID" value="KPN_00292"/>
</dbReference>
<dbReference type="KEGG" id="kpn:KPN_00292"/>
<dbReference type="HOGENOM" id="CLU_106652_0_0_6"/>
<dbReference type="Proteomes" id="UP000000265">
    <property type="component" value="Chromosome"/>
</dbReference>
<dbReference type="Gene3D" id="2.60.40.10">
    <property type="entry name" value="Immunoglobulins"/>
    <property type="match status" value="1"/>
</dbReference>
<dbReference type="InterPro" id="IPR040695">
    <property type="entry name" value="EcpB_C"/>
</dbReference>
<dbReference type="InterPro" id="IPR013783">
    <property type="entry name" value="Ig-like_fold"/>
</dbReference>
<dbReference type="InterPro" id="IPR008962">
    <property type="entry name" value="PapD-like_sf"/>
</dbReference>
<dbReference type="Pfam" id="PF18649">
    <property type="entry name" value="EcpB_C"/>
    <property type="match status" value="1"/>
</dbReference>
<dbReference type="SUPFAM" id="SSF49354">
    <property type="entry name" value="PapD-like"/>
    <property type="match status" value="1"/>
</dbReference>
<gene>
    <name type="primary">ecpB</name>
    <name type="synonym">matC</name>
    <name type="ordered locus">KPN78578_02830</name>
    <name type="ORF">KPN_00292</name>
</gene>
<feature type="signal peptide" evidence="2">
    <location>
        <begin position="1"/>
        <end position="20"/>
    </location>
</feature>
<feature type="chain" id="PRO_0000369169" description="Probable fimbrial chaperone EcpB">
    <location>
        <begin position="21"/>
        <end position="222"/>
    </location>
</feature>
<sequence length="222" mass="24308">MKKHLLALGLLLAGVSPAQALDVGDISSFMNSGSSTLSKTIKNSTDSGRLINIHLERLSSPLDGGQVIPMDKPDEVLLTPASLLLPAQASDVIRFFYKGPADDKERYYRIVWFDQALSDAQRDNANRSAVATASARIGTILVVAPRQVNYRFQYANGSLTNTGNATLRILAYGPCLKAADGKECKENYYLMPGKSRRFTRVDTADKKGRVALWQGEQFVPVK</sequence>
<reference key="1">
    <citation type="submission" date="2006-09" db="EMBL/GenBank/DDBJ databases">
        <authorList>
            <consortium name="The Klebsiella pneumonia Genome Sequencing Project"/>
            <person name="McClelland M."/>
            <person name="Sanderson E.K."/>
            <person name="Spieth J."/>
            <person name="Clifton W.S."/>
            <person name="Latreille P."/>
            <person name="Sabo A."/>
            <person name="Pepin K."/>
            <person name="Bhonagiri V."/>
            <person name="Porwollik S."/>
            <person name="Ali J."/>
            <person name="Wilson R.K."/>
        </authorList>
    </citation>
    <scope>NUCLEOTIDE SEQUENCE [LARGE SCALE GENOMIC DNA]</scope>
    <source>
        <strain>ATCC 700721 / MGH 78578</strain>
    </source>
</reference>
<proteinExistence type="inferred from homology"/>